<keyword id="KW-1185">Reference proteome</keyword>
<gene>
    <name type="ordered locus">AF_1151</name>
</gene>
<protein>
    <recommendedName>
        <fullName>Uncharacterized protein AF_1151</fullName>
    </recommendedName>
</protein>
<name>Y1151_ARCFU</name>
<proteinExistence type="predicted"/>
<dbReference type="EMBL" id="AE000782">
    <property type="protein sequence ID" value="AAB90099.1"/>
    <property type="molecule type" value="Genomic_DNA"/>
</dbReference>
<dbReference type="PIR" id="F69393">
    <property type="entry name" value="F69393"/>
</dbReference>
<dbReference type="RefSeq" id="WP_010878648.1">
    <property type="nucleotide sequence ID" value="NC_000917.1"/>
</dbReference>
<dbReference type="PaxDb" id="224325-AF_1151"/>
<dbReference type="DNASU" id="1484375"/>
<dbReference type="EnsemblBacteria" id="AAB90099">
    <property type="protein sequence ID" value="AAB90099"/>
    <property type="gene ID" value="AF_1151"/>
</dbReference>
<dbReference type="KEGG" id="afu:AF_1151"/>
<dbReference type="eggNOG" id="arCOG12203">
    <property type="taxonomic scope" value="Archaea"/>
</dbReference>
<dbReference type="HOGENOM" id="CLU_2190930_0_0_2"/>
<dbReference type="OrthoDB" id="51549at2157"/>
<dbReference type="Proteomes" id="UP000002199">
    <property type="component" value="Chromosome"/>
</dbReference>
<feature type="chain" id="PRO_0000127967" description="Uncharacterized protein AF_1151">
    <location>
        <begin position="1"/>
        <end position="108"/>
    </location>
</feature>
<sequence>MRQTILKLYEKANERDWKPWELQSEMRKIYENVVAVGDDLSFTVRLDKDVKPVSLEKFGASKVKLHPFKTAWRFERGFIAFEGKFLRISREIDKKLLEEILSVILPED</sequence>
<reference key="1">
    <citation type="journal article" date="1997" name="Nature">
        <title>The complete genome sequence of the hyperthermophilic, sulphate-reducing archaeon Archaeoglobus fulgidus.</title>
        <authorList>
            <person name="Klenk H.-P."/>
            <person name="Clayton R.A."/>
            <person name="Tomb J.-F."/>
            <person name="White O."/>
            <person name="Nelson K.E."/>
            <person name="Ketchum K.A."/>
            <person name="Dodson R.J."/>
            <person name="Gwinn M.L."/>
            <person name="Hickey E.K."/>
            <person name="Peterson J.D."/>
            <person name="Richardson D.L."/>
            <person name="Kerlavage A.R."/>
            <person name="Graham D.E."/>
            <person name="Kyrpides N.C."/>
            <person name="Fleischmann R.D."/>
            <person name="Quackenbush J."/>
            <person name="Lee N.H."/>
            <person name="Sutton G.G."/>
            <person name="Gill S.R."/>
            <person name="Kirkness E.F."/>
            <person name="Dougherty B.A."/>
            <person name="McKenney K."/>
            <person name="Adams M.D."/>
            <person name="Loftus B.J."/>
            <person name="Peterson S.N."/>
            <person name="Reich C.I."/>
            <person name="McNeil L.K."/>
            <person name="Badger J.H."/>
            <person name="Glodek A."/>
            <person name="Zhou L."/>
            <person name="Overbeek R."/>
            <person name="Gocayne J.D."/>
            <person name="Weidman J.F."/>
            <person name="McDonald L.A."/>
            <person name="Utterback T.R."/>
            <person name="Cotton M.D."/>
            <person name="Spriggs T."/>
            <person name="Artiach P."/>
            <person name="Kaine B.P."/>
            <person name="Sykes S.M."/>
            <person name="Sadow P.W."/>
            <person name="D'Andrea K.P."/>
            <person name="Bowman C."/>
            <person name="Fujii C."/>
            <person name="Garland S.A."/>
            <person name="Mason T.M."/>
            <person name="Olsen G.J."/>
            <person name="Fraser C.M."/>
            <person name="Smith H.O."/>
            <person name="Woese C.R."/>
            <person name="Venter J.C."/>
        </authorList>
    </citation>
    <scope>NUCLEOTIDE SEQUENCE [LARGE SCALE GENOMIC DNA]</scope>
    <source>
        <strain>ATCC 49558 / DSM 4304 / JCM 9628 / NBRC 100126 / VC-16</strain>
    </source>
</reference>
<accession>O29114</accession>
<organism>
    <name type="scientific">Archaeoglobus fulgidus (strain ATCC 49558 / DSM 4304 / JCM 9628 / NBRC 100126 / VC-16)</name>
    <dbReference type="NCBI Taxonomy" id="224325"/>
    <lineage>
        <taxon>Archaea</taxon>
        <taxon>Methanobacteriati</taxon>
        <taxon>Methanobacteriota</taxon>
        <taxon>Archaeoglobi</taxon>
        <taxon>Archaeoglobales</taxon>
        <taxon>Archaeoglobaceae</taxon>
        <taxon>Archaeoglobus</taxon>
    </lineage>
</organism>